<name>CHSA_EMENI</name>
<keyword id="KW-1003">Cell membrane</keyword>
<keyword id="KW-0961">Cell wall biogenesis/degradation</keyword>
<keyword id="KW-0325">Glycoprotein</keyword>
<keyword id="KW-0328">Glycosyltransferase</keyword>
<keyword id="KW-0472">Membrane</keyword>
<keyword id="KW-1185">Reference proteome</keyword>
<keyword id="KW-0808">Transferase</keyword>
<keyword id="KW-0812">Transmembrane</keyword>
<keyword id="KW-1133">Transmembrane helix</keyword>
<dbReference type="EC" id="2.4.1.16" evidence="14"/>
<dbReference type="EMBL" id="D21268">
    <property type="protein sequence ID" value="BAA04806.1"/>
    <property type="molecule type" value="Genomic_DNA"/>
</dbReference>
<dbReference type="EMBL" id="AACD01000117">
    <property type="protein sequence ID" value="EAA61678.1"/>
    <property type="status" value="ALT_SEQ"/>
    <property type="molecule type" value="Genomic_DNA"/>
</dbReference>
<dbReference type="EMBL" id="M82939">
    <property type="protein sequence ID" value="AAA33303.1"/>
    <property type="molecule type" value="Genomic_DNA"/>
</dbReference>
<dbReference type="EMBL" id="BN001304">
    <property type="protein sequence ID" value="CBF79220.1"/>
    <property type="molecule type" value="Genomic_DNA"/>
</dbReference>
<dbReference type="PIR" id="JC2314">
    <property type="entry name" value="JC2314"/>
</dbReference>
<dbReference type="RefSeq" id="XP_664636.1">
    <property type="nucleotide sequence ID" value="XM_659544.1"/>
</dbReference>
<dbReference type="SMR" id="P30584"/>
<dbReference type="FunCoup" id="P30584">
    <property type="interactions" value="76"/>
</dbReference>
<dbReference type="STRING" id="227321.P30584"/>
<dbReference type="CAZy" id="GT2">
    <property type="family name" value="Glycosyltransferase Family 2"/>
</dbReference>
<dbReference type="EnsemblFungi" id="CBF79220">
    <property type="protein sequence ID" value="CBF79220"/>
    <property type="gene ID" value="ANIA_07032"/>
</dbReference>
<dbReference type="eggNOG" id="KOG2571">
    <property type="taxonomic scope" value="Eukaryota"/>
</dbReference>
<dbReference type="HOGENOM" id="CLU_045174_1_0_1"/>
<dbReference type="InParanoid" id="P30584"/>
<dbReference type="OMA" id="TTMRETE"/>
<dbReference type="OrthoDB" id="26569at2759"/>
<dbReference type="BRENDA" id="2.4.1.16">
    <property type="organism ID" value="517"/>
</dbReference>
<dbReference type="Proteomes" id="UP000000560">
    <property type="component" value="Chromosome IV"/>
</dbReference>
<dbReference type="GO" id="GO:0071944">
    <property type="term" value="C:cell periphery"/>
    <property type="evidence" value="ECO:0000318"/>
    <property type="project" value="GO_Central"/>
</dbReference>
<dbReference type="GO" id="GO:0030428">
    <property type="term" value="C:cell septum"/>
    <property type="evidence" value="ECO:0000318"/>
    <property type="project" value="GO_Central"/>
</dbReference>
<dbReference type="GO" id="GO:0005935">
    <property type="term" value="C:cellular bud neck"/>
    <property type="evidence" value="ECO:0007669"/>
    <property type="project" value="EnsemblFungi"/>
</dbReference>
<dbReference type="GO" id="GO:0005886">
    <property type="term" value="C:plasma membrane"/>
    <property type="evidence" value="ECO:0007669"/>
    <property type="project" value="UniProtKB-SubCell"/>
</dbReference>
<dbReference type="GO" id="GO:0004100">
    <property type="term" value="F:chitin synthase activity"/>
    <property type="evidence" value="ECO:0000318"/>
    <property type="project" value="GO_Central"/>
</dbReference>
<dbReference type="GO" id="GO:0071555">
    <property type="term" value="P:cell wall organization"/>
    <property type="evidence" value="ECO:0007669"/>
    <property type="project" value="UniProtKB-KW"/>
</dbReference>
<dbReference type="GO" id="GO:0006031">
    <property type="term" value="P:chitin biosynthetic process"/>
    <property type="evidence" value="ECO:0000318"/>
    <property type="project" value="GO_Central"/>
</dbReference>
<dbReference type="GO" id="GO:0048315">
    <property type="term" value="P:conidium formation"/>
    <property type="evidence" value="ECO:0000316"/>
    <property type="project" value="CACAO"/>
</dbReference>
<dbReference type="GO" id="GO:0000918">
    <property type="term" value="P:division septum site selection"/>
    <property type="evidence" value="ECO:0000316"/>
    <property type="project" value="CACAO"/>
</dbReference>
<dbReference type="GO" id="GO:1902404">
    <property type="term" value="P:mitotic actomyosin contractile ring contraction"/>
    <property type="evidence" value="ECO:0007669"/>
    <property type="project" value="EnsemblFungi"/>
</dbReference>
<dbReference type="CDD" id="cd04190">
    <property type="entry name" value="Chitin_synth_C"/>
    <property type="match status" value="1"/>
</dbReference>
<dbReference type="InterPro" id="IPR004835">
    <property type="entry name" value="Chitin_synth"/>
</dbReference>
<dbReference type="InterPro" id="IPR004834">
    <property type="entry name" value="Chitin_synth_fun"/>
</dbReference>
<dbReference type="InterPro" id="IPR013616">
    <property type="entry name" value="Chitin_synth_N"/>
</dbReference>
<dbReference type="InterPro" id="IPR029044">
    <property type="entry name" value="Nucleotide-diphossugar_trans"/>
</dbReference>
<dbReference type="PANTHER" id="PTHR22914">
    <property type="entry name" value="CHITIN SYNTHASE"/>
    <property type="match status" value="1"/>
</dbReference>
<dbReference type="PANTHER" id="PTHR22914:SF38">
    <property type="entry name" value="CHITIN SYNTHASE 2"/>
    <property type="match status" value="1"/>
</dbReference>
<dbReference type="Pfam" id="PF01644">
    <property type="entry name" value="Chitin_synth_1"/>
    <property type="match status" value="1"/>
</dbReference>
<dbReference type="Pfam" id="PF08407">
    <property type="entry name" value="Chitin_synth_1N"/>
    <property type="match status" value="1"/>
</dbReference>
<dbReference type="SUPFAM" id="SSF53448">
    <property type="entry name" value="Nucleotide-diphospho-sugar transferases"/>
    <property type="match status" value="1"/>
</dbReference>
<evidence type="ECO:0000255" key="1"/>
<evidence type="ECO:0000255" key="2">
    <source>
        <dbReference type="PROSITE-ProRule" id="PRU00498"/>
    </source>
</evidence>
<evidence type="ECO:0000256" key="3">
    <source>
        <dbReference type="SAM" id="MobiDB-lite"/>
    </source>
</evidence>
<evidence type="ECO:0000269" key="4">
    <source>
    </source>
</evidence>
<evidence type="ECO:0000269" key="5">
    <source>
    </source>
</evidence>
<evidence type="ECO:0000269" key="6">
    <source>
    </source>
</evidence>
<evidence type="ECO:0000269" key="7">
    <source>
    </source>
</evidence>
<evidence type="ECO:0000269" key="8">
    <source>
    </source>
</evidence>
<evidence type="ECO:0000269" key="9">
    <source>
    </source>
</evidence>
<evidence type="ECO:0000269" key="10">
    <source>
    </source>
</evidence>
<evidence type="ECO:0000269" key="11">
    <source>
    </source>
</evidence>
<evidence type="ECO:0000303" key="12">
    <source>
    </source>
</evidence>
<evidence type="ECO:0000305" key="13"/>
<evidence type="ECO:0000305" key="14">
    <source>
    </source>
</evidence>
<proteinExistence type="evidence at transcript level"/>
<reference key="1">
    <citation type="journal article" date="1994" name="Biosci. Biotechnol. Biochem.">
        <title>Isolation and characterization of two chitin synthase genes from Aspergillus nidulans.</title>
        <authorList>
            <person name="Yanai K."/>
            <person name="Kojima N."/>
            <person name="Takaya N."/>
            <person name="Horiuchi H."/>
            <person name="Ohta A."/>
            <person name="Takagi M."/>
        </authorList>
    </citation>
    <scope>NUCLEOTIDE SEQUENCE [GENOMIC DNA]</scope>
    <scope>FUNCTION</scope>
    <scope>DISRUPTION PHENOTYPE</scope>
    <source>
        <strain>FGSC 89</strain>
    </source>
</reference>
<reference key="2">
    <citation type="journal article" date="2005" name="Nature">
        <title>Sequencing of Aspergillus nidulans and comparative analysis with A. fumigatus and A. oryzae.</title>
        <authorList>
            <person name="Galagan J.E."/>
            <person name="Calvo S.E."/>
            <person name="Cuomo C."/>
            <person name="Ma L.-J."/>
            <person name="Wortman J.R."/>
            <person name="Batzoglou S."/>
            <person name="Lee S.-I."/>
            <person name="Bastuerkmen M."/>
            <person name="Spevak C.C."/>
            <person name="Clutterbuck J."/>
            <person name="Kapitonov V."/>
            <person name="Jurka J."/>
            <person name="Scazzocchio C."/>
            <person name="Farman M.L."/>
            <person name="Butler J."/>
            <person name="Purcell S."/>
            <person name="Harris S."/>
            <person name="Braus G.H."/>
            <person name="Draht O."/>
            <person name="Busch S."/>
            <person name="D'Enfert C."/>
            <person name="Bouchier C."/>
            <person name="Goldman G.H."/>
            <person name="Bell-Pedersen D."/>
            <person name="Griffiths-Jones S."/>
            <person name="Doonan J.H."/>
            <person name="Yu J."/>
            <person name="Vienken K."/>
            <person name="Pain A."/>
            <person name="Freitag M."/>
            <person name="Selker E.U."/>
            <person name="Archer D.B."/>
            <person name="Penalva M.A."/>
            <person name="Oakley B.R."/>
            <person name="Momany M."/>
            <person name="Tanaka T."/>
            <person name="Kumagai T."/>
            <person name="Asai K."/>
            <person name="Machida M."/>
            <person name="Nierman W.C."/>
            <person name="Denning D.W."/>
            <person name="Caddick M.X."/>
            <person name="Hynes M."/>
            <person name="Paoletti M."/>
            <person name="Fischer R."/>
            <person name="Miller B.L."/>
            <person name="Dyer P.S."/>
            <person name="Sachs M.S."/>
            <person name="Osmani S.A."/>
            <person name="Birren B.W."/>
        </authorList>
    </citation>
    <scope>NUCLEOTIDE SEQUENCE [LARGE SCALE GENOMIC DNA]</scope>
    <source>
        <strain>FGSC A4 / ATCC 38163 / CBS 112.46 / NRRL 194 / M139</strain>
    </source>
</reference>
<reference key="3">
    <citation type="journal article" date="2009" name="Fungal Genet. Biol.">
        <title>The 2008 update of the Aspergillus nidulans genome annotation: a community effort.</title>
        <authorList>
            <person name="Wortman J.R."/>
            <person name="Gilsenan J.M."/>
            <person name="Joardar V."/>
            <person name="Deegan J."/>
            <person name="Clutterbuck J."/>
            <person name="Andersen M.R."/>
            <person name="Archer D."/>
            <person name="Bencina M."/>
            <person name="Braus G."/>
            <person name="Coutinho P."/>
            <person name="von Dohren H."/>
            <person name="Doonan J."/>
            <person name="Driessen A.J."/>
            <person name="Durek P."/>
            <person name="Espeso E."/>
            <person name="Fekete E."/>
            <person name="Flipphi M."/>
            <person name="Estrada C.G."/>
            <person name="Geysens S."/>
            <person name="Goldman G."/>
            <person name="de Groot P.W."/>
            <person name="Hansen K."/>
            <person name="Harris S.D."/>
            <person name="Heinekamp T."/>
            <person name="Helmstaedt K."/>
            <person name="Henrissat B."/>
            <person name="Hofmann G."/>
            <person name="Homan T."/>
            <person name="Horio T."/>
            <person name="Horiuchi H."/>
            <person name="James S."/>
            <person name="Jones M."/>
            <person name="Karaffa L."/>
            <person name="Karanyi Z."/>
            <person name="Kato M."/>
            <person name="Keller N."/>
            <person name="Kelly D.E."/>
            <person name="Kiel J.A."/>
            <person name="Kim J.M."/>
            <person name="van der Klei I.J."/>
            <person name="Klis F.M."/>
            <person name="Kovalchuk A."/>
            <person name="Krasevec N."/>
            <person name="Kubicek C.P."/>
            <person name="Liu B."/>
            <person name="Maccabe A."/>
            <person name="Meyer V."/>
            <person name="Mirabito P."/>
            <person name="Miskei M."/>
            <person name="Mos M."/>
            <person name="Mullins J."/>
            <person name="Nelson D.R."/>
            <person name="Nielsen J."/>
            <person name="Oakley B.R."/>
            <person name="Osmani S.A."/>
            <person name="Pakula T."/>
            <person name="Paszewski A."/>
            <person name="Paulsen I."/>
            <person name="Pilsyk S."/>
            <person name="Pocsi I."/>
            <person name="Punt P.J."/>
            <person name="Ram A.F."/>
            <person name="Ren Q."/>
            <person name="Robellet X."/>
            <person name="Robson G."/>
            <person name="Seiboth B."/>
            <person name="van Solingen P."/>
            <person name="Specht T."/>
            <person name="Sun J."/>
            <person name="Taheri-Talesh N."/>
            <person name="Takeshita N."/>
            <person name="Ussery D."/>
            <person name="vanKuyk P.A."/>
            <person name="Visser H."/>
            <person name="van de Vondervoort P.J."/>
            <person name="de Vries R.P."/>
            <person name="Walton J."/>
            <person name="Xiang X."/>
            <person name="Xiong Y."/>
            <person name="Zeng A.P."/>
            <person name="Brandt B.W."/>
            <person name="Cornell M.J."/>
            <person name="van den Hondel C.A."/>
            <person name="Visser J."/>
            <person name="Oliver S.G."/>
            <person name="Turner G."/>
        </authorList>
    </citation>
    <scope>GENOME REANNOTATION</scope>
    <source>
        <strain>FGSC A4 / ATCC 38163 / CBS 112.46 / NRRL 194 / M139</strain>
    </source>
</reference>
<reference key="4">
    <citation type="journal article" date="1992" name="Proc. Natl. Acad. Sci. U.S.A.">
        <title>Classification of fungal chitin synthases.</title>
        <authorList>
            <person name="Bowen A.R."/>
            <person name="Chen-Wu J.L.-P."/>
            <person name="Momany M."/>
            <person name="Young R."/>
            <person name="Szaniszlo P.J."/>
            <person name="Robbins P.W."/>
        </authorList>
    </citation>
    <scope>NUCLEOTIDE SEQUENCE [GENOMIC DNA] OF 303-491</scope>
</reference>
<reference key="5">
    <citation type="journal article" date="1996" name="Mol. Gen. Genet.">
        <title>The Aspergillus nidulans genes chsA and chsD encode chitin synthases which have redundant functions in conidia formation.</title>
        <authorList>
            <person name="Motoyama T."/>
            <person name="Fujiwara M."/>
            <person name="Kojima N."/>
            <person name="Horiuchi H."/>
            <person name="Ohta A."/>
            <person name="Takagi M."/>
        </authorList>
    </citation>
    <scope>FUNCTION</scope>
    <scope>DISRUPTION PHENOTYPE</scope>
</reference>
<reference key="6">
    <citation type="journal article" date="1997" name="Mol. Gen. Genet.">
        <authorList>
            <person name="Motoyama T."/>
            <person name="Fujiwara M."/>
            <person name="Kojima N."/>
            <person name="Horiuchi H."/>
            <person name="Ohta A."/>
            <person name="Takagi M."/>
        </authorList>
    </citation>
    <scope>ERRATUM OF PUBMED:8709948</scope>
</reference>
<reference key="7">
    <citation type="journal article" date="2000" name="FEMS Microbiol. Lett.">
        <title>The chsA gene from Aspergillus nidulans is necessary for maximal conidiation.</title>
        <authorList>
            <person name="Culp D.W."/>
            <person name="Dodge C.L."/>
            <person name="Miao Y."/>
            <person name="Li L."/>
            <person name="Sag-Ozkal D."/>
            <person name="Borgia P.T."/>
        </authorList>
    </citation>
    <scope>FUNCTION</scope>
    <scope>DISRUPTION PHENOTYPE</scope>
</reference>
<reference key="8">
    <citation type="journal article" date="2000" name="J. Biochem.">
        <title>Evidence that the Aspergillus nidulans class I and class II chitin synthase genes, chsC and chsA, share critical roles in hyphal wall integrity and conidiophore development.</title>
        <authorList>
            <person name="Fujiwara M."/>
            <person name="Ichinomiya M."/>
            <person name="Motoyama T."/>
            <person name="Horiuchi H."/>
            <person name="Ohta A."/>
            <person name="Takagi M."/>
        </authorList>
    </citation>
    <scope>FUNCTION</scope>
    <scope>DISRUPTION PHENOTYPE</scope>
    <scope>TISSUE SPECIFICITY</scope>
</reference>
<reference key="9">
    <citation type="journal article" date="2002" name="Curr. Genet.">
        <title>Different functions of the class I and class II chitin synthase genes, chsC and chsA, are revealed by repression of chsB expression in Aspergillus nidulans.</title>
        <authorList>
            <person name="Ichinomiya M."/>
            <person name="Horiuchi H."/>
            <person name="Ohta A."/>
        </authorList>
    </citation>
    <scope>FUNCTION</scope>
</reference>
<reference key="10">
    <citation type="journal article" date="2004" name="Fungal Genet. Biol.">
        <title>Differential expression of the chitin synthase genes of Aspergillus nidulans, chsA, chsB, and chsC, in response to developmental status and environmental factors.</title>
        <authorList>
            <person name="Lee J.I."/>
            <person name="Choi J.H."/>
            <person name="Park B.C."/>
            <person name="Park Y.H."/>
            <person name="Lee M.Y."/>
            <person name="Park H.M."/>
            <person name="Maeng P.J."/>
        </authorList>
    </citation>
    <scope>INDUCTION</scope>
</reference>
<reference key="11">
    <citation type="journal article" date="2005" name="Curr. Genet.">
        <title>Expression of asexual developmental regulator gene abaA is affected in the double mutants of classes I and II chitin synthase genes, chsC and chsA, of Aspergillus nidulans.</title>
        <authorList>
            <person name="Ichinomiya M."/>
            <person name="Ohta A."/>
            <person name="Horiuchi H."/>
        </authorList>
    </citation>
    <scope>FUNCTION</scope>
</reference>
<reference key="12">
    <citation type="journal article" date="2005" name="Eukaryot. Cell">
        <title>Class I and class II chitin synthases are involved in septum formation in the filamentous fungus Aspergillus nidulans.</title>
        <authorList>
            <person name="Ichinomiya M."/>
            <person name="Yamada E."/>
            <person name="Yamashita S."/>
            <person name="Ohta A."/>
            <person name="Horiuchi H."/>
        </authorList>
    </citation>
    <scope>FUNCTION</scope>
    <scope>SUBCELLULAR LOCATION</scope>
</reference>
<accession>P30584</accession>
<accession>C8VB73</accession>
<accession>Q5AXE8</accession>
<protein>
    <recommendedName>
        <fullName evidence="12">Chitin synthase A</fullName>
        <ecNumber evidence="14">2.4.1.16</ecNumber>
    </recommendedName>
    <alternativeName>
        <fullName evidence="13">Chitin-UDP acetyl-glucosaminyl transferase A</fullName>
    </alternativeName>
    <alternativeName>
        <fullName evidence="12">Class-II chitin synthase A</fullName>
    </alternativeName>
</protein>
<gene>
    <name evidence="12" type="primary">chsA</name>
    <name type="synonym">chs2</name>
    <name type="ORF">AN7032</name>
</gene>
<comment type="function">
    <text evidence="4 5 6 8 9 10 11 14">Polymerizes chitin, a structural polymer of the cell wall and septum, by transferring the sugar moiety of UDP-GlcNAc to the non-reducing end of the growing chitin polymer (Probable). Seems not to be involved in hyphal growth, but, with chsC, chsA shares critical functions in hyphal wall integrity and differentiation (PubMed:10620691, PubMed:10731706, PubMed:12420146, PubMed:7765508). ChsA and chsC share also overlapping roles in septum formation (PubMed:15947204). Invoved in the production of the asexual spores (conidia) that are formed by differentiated aerial hyphae called conidiophores (PubMed:10620691, PubMed:16082523, PubMed:8709948).</text>
</comment>
<comment type="catalytic activity">
    <reaction evidence="14">
        <text>[(1-&gt;4)-N-acetyl-beta-D-glucosaminyl](n) + UDP-N-acetyl-alpha-D-glucosamine = [(1-&gt;4)-N-acetyl-beta-D-glucosaminyl](n+1) + UDP + H(+)</text>
        <dbReference type="Rhea" id="RHEA:16637"/>
        <dbReference type="Rhea" id="RHEA-COMP:9593"/>
        <dbReference type="Rhea" id="RHEA-COMP:9595"/>
        <dbReference type="ChEBI" id="CHEBI:15378"/>
        <dbReference type="ChEBI" id="CHEBI:17029"/>
        <dbReference type="ChEBI" id="CHEBI:57705"/>
        <dbReference type="ChEBI" id="CHEBI:58223"/>
        <dbReference type="EC" id="2.4.1.16"/>
    </reaction>
    <physiologicalReaction direction="left-to-right" evidence="14">
        <dbReference type="Rhea" id="RHEA:16638"/>
    </physiologicalReaction>
</comment>
<comment type="subcellular location">
    <subcellularLocation>
        <location evidence="8">Cell membrane</location>
        <topology evidence="1">Multi-pass membrane protein</topology>
    </subcellularLocation>
    <subcellularLocation>
        <location evidence="8">Cell septum</location>
    </subcellularLocation>
    <text evidence="8">Transiently exists at the septation sites during and shortly after septum formation.</text>
</comment>
<comment type="tissue specificity">
    <text evidence="5">Mainly expressed in the metulae, phialides, and conidia.</text>
</comment>
<comment type="induction">
    <text evidence="7">Expressed specifically during asexual differentiation but not during either vegetative growth or sexual differentiation (PubMed:15121085). Expression is stimulated by osmostress (PubMed:15121085).</text>
</comment>
<comment type="disruption phenotype">
    <text evidence="4 5 10 11">Does not affect hyphal growth (PubMed:10620691, PubMed:7765508). Leads to a remarkable decrease in the efficiency of conidia formation (PubMed:10620691, PubMed:8709948). Exhibits growth defects on media supplemented with sodium dodecyl sulfate (SDS), high concentration of salts, chitin-binding dyes, or chitin synthase competitive inhibitors, when chsC is also deleted (PubMed:10731706).</text>
</comment>
<comment type="similarity">
    <text evidence="13">Belongs to the chitin synthase family. Class II subfamily.</text>
</comment>
<comment type="sequence caution" evidence="13">
    <conflict type="erroneous gene model prediction">
        <sequence resource="EMBL-CDS" id="EAA61678"/>
    </conflict>
</comment>
<organism>
    <name type="scientific">Emericella nidulans (strain FGSC A4 / ATCC 38163 / CBS 112.46 / NRRL 194 / M139)</name>
    <name type="common">Aspergillus nidulans</name>
    <dbReference type="NCBI Taxonomy" id="227321"/>
    <lineage>
        <taxon>Eukaryota</taxon>
        <taxon>Fungi</taxon>
        <taxon>Dikarya</taxon>
        <taxon>Ascomycota</taxon>
        <taxon>Pezizomycotina</taxon>
        <taxon>Eurotiomycetes</taxon>
        <taxon>Eurotiomycetidae</taxon>
        <taxon>Eurotiales</taxon>
        <taxon>Aspergillaceae</taxon>
        <taxon>Aspergillus</taxon>
        <taxon>Aspergillus subgen. Nidulantes</taxon>
    </lineage>
</organism>
<sequence>MDCQNGRRANRTVRFARTAESRYPERYSYEYDPEETLSRAAPSMRNAPTIPPPTASGADEMRYTASRPASPARPWSPTRAADWVRPPSAAASYYERADINGSPRPGTPSSRYGGSPRRPLPPAPLFSKPGTTTQDTKIDIGDGEEDPFGGGGRTISSRHGPQGSVQSFTSESTFIADETDLEKVDLDEYEEESNETKSMVDPNLHYGPAPEKQSRRGVRNAQMAKKEVQLVNGELILECKIPTILHSFLPRRDDREFTHMRYTAVTCDPDDFTQRGYKLRQQIGRTMRETELFICITMYNEDETHFTRTMHGVMQNISHFCSRSKSRTWGKDGWKKIVVCIISDGRKKVHPRTLNALAALGVYQEGIAKNVVNQKQVNAHVYEYTTQVSLDSDLKFKGAEKGIVPCQVIFCLKEHNQKKLNSHRWFFNAFGRALQPNICILLDVGTRPEPTALYHLWKAFDQDSNVAGAAGEIKASKGKNMLGLLNPLVASQNFEYKMSNILDKPLESVFGYITVLPGALSAYRFFALQNDAEGNGPLNQYFKGETLHGKDADVFTANMYLAEDRILCWELVAKREERWVLRFVKSAVGETDVPDSIPEFISQRRRWLNGAFFAAVYSIVNVKQLWKTDHSLARKILLQIESVYQLLQLIFTYFGLANFYLAFFFIAGSLTDEKIDPFGHNMGKYIFIVLRYACVLVMCLQFIFSMGNRPQGAKKLYLSSMIVYSIVMAYTAFCTLYLIVLELMAKTGHDVPITMSDTLFVNIVVSLLSTVGLYFFTSFMYLDPWHMFTSSAQYFALLPSYICTLQCYAFCNTHDVTWGTKGDNTINTDLGTARIINGSIVEVEMPSEQLDIDSGYDAALRNLRDRLEVPDPGVSESQQQEDYYRAVRTYMVSVWMVANVVLAMAVSEVYGVGSSGTNVYLAIILWSVAVLAIIRAIGSTAYAVLYLIQKLVEGKAKFQAGNIASANASAAGSSLGTKSNVSYGSKGLNMTDRINETKWAISRGMQKAMFWKK</sequence>
<feature type="chain" id="PRO_0000193691" description="Chitin synthase A">
    <location>
        <begin position="1"/>
        <end position="1013"/>
    </location>
</feature>
<feature type="transmembrane region" description="Helical" evidence="1">
    <location>
        <begin position="646"/>
        <end position="666"/>
    </location>
</feature>
<feature type="transmembrane region" description="Helical" evidence="1">
    <location>
        <begin position="686"/>
        <end position="706"/>
    </location>
</feature>
<feature type="transmembrane region" description="Helical" evidence="1">
    <location>
        <begin position="721"/>
        <end position="741"/>
    </location>
</feature>
<feature type="transmembrane region" description="Helical" evidence="1">
    <location>
        <begin position="759"/>
        <end position="779"/>
    </location>
</feature>
<feature type="transmembrane region" description="Helical" evidence="1">
    <location>
        <begin position="792"/>
        <end position="811"/>
    </location>
</feature>
<feature type="transmembrane region" description="Helical" evidence="1">
    <location>
        <begin position="892"/>
        <end position="912"/>
    </location>
</feature>
<feature type="transmembrane region" description="Helical" evidence="1">
    <location>
        <begin position="919"/>
        <end position="939"/>
    </location>
</feature>
<feature type="region of interest" description="Disordered" evidence="3">
    <location>
        <begin position="26"/>
        <end position="83"/>
    </location>
</feature>
<feature type="region of interest" description="Disordered" evidence="3">
    <location>
        <begin position="95"/>
        <end position="218"/>
    </location>
</feature>
<feature type="compositionally biased region" description="Low complexity" evidence="3">
    <location>
        <begin position="64"/>
        <end position="81"/>
    </location>
</feature>
<feature type="compositionally biased region" description="Polar residues" evidence="3">
    <location>
        <begin position="154"/>
        <end position="173"/>
    </location>
</feature>
<feature type="glycosylation site" description="N-linked (GlcNAc...) asparagine" evidence="2">
    <location>
        <position position="10"/>
    </location>
</feature>
<feature type="glycosylation site" description="N-linked (GlcNAc...) asparagine" evidence="2">
    <location>
        <position position="194"/>
    </location>
</feature>
<feature type="glycosylation site" description="N-linked (GlcNAc...) asparagine" evidence="2">
    <location>
        <position position="316"/>
    </location>
</feature>
<feature type="glycosylation site" description="N-linked (GlcNAc...) asparagine" evidence="2">
    <location>
        <position position="837"/>
    </location>
</feature>
<feature type="glycosylation site" description="N-linked (GlcNAc...) asparagine" evidence="2">
    <location>
        <position position="967"/>
    </location>
</feature>
<feature type="glycosylation site" description="N-linked (GlcNAc...) asparagine" evidence="2">
    <location>
        <position position="980"/>
    </location>
</feature>
<feature type="glycosylation site" description="N-linked (GlcNAc...) asparagine" evidence="2">
    <location>
        <position position="989"/>
    </location>
</feature>
<feature type="glycosylation site" description="N-linked (GlcNAc...) asparagine" evidence="2">
    <location>
        <position position="995"/>
    </location>
</feature>